<accession>P03153</accession>
<comment type="function">
    <text evidence="2">May regulate immune response to the intracellular capsid in acting as a T-cell tolerogen, by having an immunoregulatory effect which prevents destruction of infected cells by cytotoxic T-cells. This immune regulation may predispose to chronicity during perinatal infections and prevent severe liver injury during adult infections.</text>
</comment>
<comment type="subunit">
    <text evidence="2">Homodimerizes.</text>
</comment>
<comment type="subcellular location">
    <subcellularLocation>
        <location evidence="2">Secreted</location>
    </subcellularLocation>
    <subcellularLocation>
        <location evidence="2">Host nucleus</location>
    </subcellularLocation>
</comment>
<comment type="alternative products">
    <event type="alternative initiation"/>
    <isoform>
        <id>P03153-1</id>
        <name>External core antigen</name>
        <sequence type="displayed"/>
    </isoform>
    <isoform>
        <id>P0C6J1-1</id>
        <name>Capsid protein</name>
        <sequence type="external"/>
    </isoform>
</comment>
<comment type="PTM">
    <text evidence="2">Phosphorylated.</text>
</comment>
<comment type="PTM">
    <text evidence="2">Cleaved by host furin.</text>
</comment>
<comment type="similarity">
    <text evidence="2">Belongs to the orthohepadnavirus precore antigen family.</text>
</comment>
<gene>
    <name evidence="2" type="primary">C</name>
</gene>
<evidence type="ECO:0000250" key="1"/>
<evidence type="ECO:0000255" key="2">
    <source>
        <dbReference type="HAMAP-Rule" id="MF_04076"/>
    </source>
</evidence>
<evidence type="ECO:0000256" key="3">
    <source>
        <dbReference type="SAM" id="MobiDB-lite"/>
    </source>
</evidence>
<protein>
    <recommendedName>
        <fullName evidence="2">External core antigen</fullName>
    </recommendedName>
    <alternativeName>
        <fullName evidence="2">HBeAg</fullName>
    </alternativeName>
    <alternativeName>
        <fullName evidence="2">Precore protein</fullName>
    </alternativeName>
    <alternativeName>
        <fullName evidence="2">p25</fullName>
    </alternativeName>
</protein>
<organismHost>
    <name type="scientific">Otospermophilus beecheyi</name>
    <name type="common">California ground squirrel</name>
    <name type="synonym">Spermophilus beecheyi</name>
    <dbReference type="NCBI Taxonomy" id="34862"/>
</organismHost>
<dbReference type="EMBL" id="K02715">
    <property type="protein sequence ID" value="AAA46755.1"/>
    <property type="molecule type" value="Genomic_DNA"/>
</dbReference>
<dbReference type="PIR" id="A03715">
    <property type="entry name" value="NKVLS"/>
</dbReference>
<dbReference type="RefSeq" id="NP_040993.1">
    <molecule id="P03153-1"/>
    <property type="nucleotide sequence ID" value="NC_001484.1"/>
</dbReference>
<dbReference type="SMR" id="P03153"/>
<dbReference type="KEGG" id="vg:1488460"/>
<dbReference type="OrthoDB" id="11307at10239"/>
<dbReference type="Proteomes" id="UP000009156">
    <property type="component" value="Genome"/>
</dbReference>
<dbReference type="GO" id="GO:0005576">
    <property type="term" value="C:extracellular region"/>
    <property type="evidence" value="ECO:0007669"/>
    <property type="project" value="UniProtKB-SubCell"/>
</dbReference>
<dbReference type="GO" id="GO:0043657">
    <property type="term" value="C:host cell"/>
    <property type="evidence" value="ECO:0007669"/>
    <property type="project" value="GOC"/>
</dbReference>
<dbReference type="GO" id="GO:0030430">
    <property type="term" value="C:host cell cytoplasm"/>
    <property type="evidence" value="ECO:0007669"/>
    <property type="project" value="UniProtKB-UniRule"/>
</dbReference>
<dbReference type="GO" id="GO:0042025">
    <property type="term" value="C:host cell nucleus"/>
    <property type="evidence" value="ECO:0007669"/>
    <property type="project" value="UniProtKB-SubCell"/>
</dbReference>
<dbReference type="GO" id="GO:0039619">
    <property type="term" value="C:T=4 icosahedral viral capsid"/>
    <property type="evidence" value="ECO:0007669"/>
    <property type="project" value="UniProtKB-UniRule"/>
</dbReference>
<dbReference type="GO" id="GO:0003677">
    <property type="term" value="F:DNA binding"/>
    <property type="evidence" value="ECO:0007669"/>
    <property type="project" value="UniProtKB-UniRule"/>
</dbReference>
<dbReference type="GO" id="GO:0003723">
    <property type="term" value="F:RNA binding"/>
    <property type="evidence" value="ECO:0007669"/>
    <property type="project" value="UniProtKB-UniRule"/>
</dbReference>
<dbReference type="GO" id="GO:0005198">
    <property type="term" value="F:structural molecule activity"/>
    <property type="evidence" value="ECO:0007669"/>
    <property type="project" value="UniProtKB-UniRule"/>
</dbReference>
<dbReference type="GO" id="GO:0075521">
    <property type="term" value="P:microtubule-dependent intracellular transport of viral material towards nucleus"/>
    <property type="evidence" value="ECO:0007669"/>
    <property type="project" value="UniProtKB-UniRule"/>
</dbReference>
<dbReference type="GO" id="GO:0046718">
    <property type="term" value="P:symbiont entry into host cell"/>
    <property type="evidence" value="ECO:0007669"/>
    <property type="project" value="UniProtKB-UniRule"/>
</dbReference>
<dbReference type="GO" id="GO:0075732">
    <property type="term" value="P:viral penetration into host nucleus"/>
    <property type="evidence" value="ECO:0007669"/>
    <property type="project" value="UniProtKB-UniRule"/>
</dbReference>
<dbReference type="Gene3D" id="1.10.4090.10">
    <property type="entry name" value="Viral capsid, core domain supefamily, Hepatitis B virus"/>
    <property type="match status" value="1"/>
</dbReference>
<dbReference type="HAMAP" id="MF_04076">
    <property type="entry name" value="HBV_HBEAG"/>
    <property type="match status" value="1"/>
</dbReference>
<dbReference type="InterPro" id="IPR013195">
    <property type="entry name" value="Hepatitis_B_virus_capsid_N"/>
</dbReference>
<dbReference type="InterPro" id="IPR002006">
    <property type="entry name" value="Hepatitis_core"/>
</dbReference>
<dbReference type="InterPro" id="IPR036459">
    <property type="entry name" value="Viral_capsid_core_dom_sf_HBV"/>
</dbReference>
<dbReference type="Pfam" id="PF08290">
    <property type="entry name" value="Hep_core_N"/>
    <property type="match status" value="1"/>
</dbReference>
<dbReference type="Pfam" id="PF00906">
    <property type="entry name" value="Hepatitis_core"/>
    <property type="match status" value="3"/>
</dbReference>
<dbReference type="SUPFAM" id="SSF47852">
    <property type="entry name" value="Hepatitis B viral capsid (hbcag)"/>
    <property type="match status" value="1"/>
</dbReference>
<proteinExistence type="inferred from homology"/>
<name>HBEAG_GSHV</name>
<keyword id="KW-0024">Alternative initiation</keyword>
<keyword id="KW-1015">Disulfide bond</keyword>
<keyword id="KW-1048">Host nucleus</keyword>
<keyword id="KW-0945">Host-virus interaction</keyword>
<keyword id="KW-0677">Repeat</keyword>
<keyword id="KW-0964">Secreted</keyword>
<keyword id="KW-0732">Signal</keyword>
<keyword id="KW-0899">Viral immunoevasion</keyword>
<organism>
    <name type="scientific">Ground squirrel hepatitis virus (strain 27)</name>
    <name type="common">GSHV</name>
    <dbReference type="NCBI Taxonomy" id="10406"/>
    <lineage>
        <taxon>Viruses</taxon>
        <taxon>Riboviria</taxon>
        <taxon>Pararnavirae</taxon>
        <taxon>Artverviricota</taxon>
        <taxon>Revtraviricetes</taxon>
        <taxon>Blubervirales</taxon>
        <taxon>Hepadnaviridae</taxon>
        <taxon>Orthohepadnavirus</taxon>
    </lineage>
</organism>
<reference key="1">
    <citation type="journal article" date="1984" name="J. Virol.">
        <title>Nucleotide sequence of an infectious molecularly cloned genome of ground squirrel hepatitis virus.</title>
        <authorList>
            <person name="Seeger C."/>
            <person name="Ganem D."/>
            <person name="Varmus H.E."/>
        </authorList>
    </citation>
    <scope>NUCLEOTIDE SEQUENCE [GENOMIC DNA]</scope>
</reference>
<feature type="signal peptide" evidence="2">
    <location>
        <begin position="1"/>
        <end position="20"/>
    </location>
</feature>
<feature type="chain" id="PRO_0000222306" description="External core antigen" evidence="2">
    <location>
        <begin position="21"/>
        <end position="217"/>
    </location>
</feature>
<feature type="propeptide" id="PRO_0000324689" evidence="1">
    <location>
        <begin position="189"/>
        <end position="217"/>
    </location>
</feature>
<feature type="repeat" description="1; half-length">
    <location>
        <begin position="189"/>
        <end position="195"/>
    </location>
</feature>
<feature type="repeat" description="2">
    <location>
        <begin position="196"/>
        <end position="203"/>
    </location>
</feature>
<feature type="repeat" description="3">
    <location>
        <begin position="204"/>
        <end position="211"/>
    </location>
</feature>
<feature type="region of interest" description="HBEAG" evidence="2">
    <location>
        <begin position="26"/>
        <end position="28"/>
    </location>
</feature>
<feature type="region of interest" description="Disordered" evidence="3">
    <location>
        <begin position="166"/>
        <end position="217"/>
    </location>
</feature>
<feature type="region of interest" description="3 X 8 AA repeats of S-P-R-R-R-R-S-Q">
    <location>
        <begin position="189"/>
        <end position="211"/>
    </location>
</feature>
<feature type="compositionally biased region" description="Basic residues" evidence="3">
    <location>
        <begin position="178"/>
        <end position="210"/>
    </location>
</feature>
<feature type="site" description="Cleavage; by host" evidence="2">
    <location>
        <begin position="188"/>
        <end position="189"/>
    </location>
</feature>
<feature type="disulfide bond" description="Interchain" evidence="2">
    <location>
        <position position="78"/>
    </location>
</feature>
<feature type="disulfide bond" description="Interchain" evidence="2">
    <location>
        <position position="91"/>
    </location>
</feature>
<sequence>MYLFHLCLVFACVPCPTVQASKLCLGWLWDMDIDPYKEFGSSYQLLNFLPLDFFPDLNALVDTAAALYEEELTGREHCSPHHTAIRQALVCWEELTRLITWMSENTTEEVRRIIVDHVNNTWGLKVRQTLWFHLSCLTFGQHTVQEFLVSFGVWIRTPAPYRPPNAPILSTLPEHTVIRRRGGSRAARSPRRRTPSPRRRRSQSPRRRRSQSPASNC</sequence>